<protein>
    <recommendedName>
        <fullName evidence="1">Citrate lyase acyl carrier protein</fullName>
    </recommendedName>
    <alternativeName>
        <fullName evidence="1">Citrate lyase gamma chain</fullName>
    </alternativeName>
</protein>
<sequence>MDIKQTAVAGSLESSDIMVTVNPSDVQGITVQLESSVEKQFGQQIRKVIEETLKHLGVKAASVEAVDKGALDCTIKARTITAVHRAAQVEVYDWKEIDSWNA</sequence>
<feature type="chain" id="PRO_0000214712" description="Citrate lyase acyl carrier protein">
    <location>
        <begin position="1"/>
        <end position="102"/>
    </location>
</feature>
<feature type="modified residue" description="O-(phosphoribosyl dephospho-coenzyme A)serine" evidence="1">
    <location>
        <position position="14"/>
    </location>
</feature>
<reference key="1">
    <citation type="journal article" date="2002" name="Proc. Natl. Acad. Sci. U.S.A.">
        <title>Genome sequence of Streptococcus mutans UA159, a cariogenic dental pathogen.</title>
        <authorList>
            <person name="Ajdic D.J."/>
            <person name="McShan W.M."/>
            <person name="McLaughlin R.E."/>
            <person name="Savic G."/>
            <person name="Chang J."/>
            <person name="Carson M.B."/>
            <person name="Primeaux C."/>
            <person name="Tian R."/>
            <person name="Kenton S."/>
            <person name="Jia H.G."/>
            <person name="Lin S.P."/>
            <person name="Qian Y."/>
            <person name="Li S."/>
            <person name="Zhu H."/>
            <person name="Najar F.Z."/>
            <person name="Lai H."/>
            <person name="White J."/>
            <person name="Roe B.A."/>
            <person name="Ferretti J.J."/>
        </authorList>
    </citation>
    <scope>NUCLEOTIDE SEQUENCE [LARGE SCALE GENOMIC DNA]</scope>
    <source>
        <strain>ATCC 700610 / UA159</strain>
    </source>
</reference>
<gene>
    <name evidence="1" type="primary">citD</name>
    <name type="ordered locus">SMU_1019</name>
</gene>
<keyword id="KW-0963">Cytoplasm</keyword>
<keyword id="KW-0597">Phosphoprotein</keyword>
<keyword id="KW-1185">Reference proteome</keyword>
<name>CITD_STRMU</name>
<accession>Q8DUC3</accession>
<comment type="function">
    <text evidence="1">Covalent carrier of the coenzyme of citrate lyase.</text>
</comment>
<comment type="subunit">
    <text evidence="1">Oligomer with a subunit composition of (alpha,beta,gamma)6.</text>
</comment>
<comment type="subcellular location">
    <subcellularLocation>
        <location evidence="1">Cytoplasm</location>
    </subcellularLocation>
</comment>
<comment type="similarity">
    <text evidence="1">Belongs to the CitD family.</text>
</comment>
<proteinExistence type="inferred from homology"/>
<organism>
    <name type="scientific">Streptococcus mutans serotype c (strain ATCC 700610 / UA159)</name>
    <dbReference type="NCBI Taxonomy" id="210007"/>
    <lineage>
        <taxon>Bacteria</taxon>
        <taxon>Bacillati</taxon>
        <taxon>Bacillota</taxon>
        <taxon>Bacilli</taxon>
        <taxon>Lactobacillales</taxon>
        <taxon>Streptococcaceae</taxon>
        <taxon>Streptococcus</taxon>
    </lineage>
</organism>
<dbReference type="EMBL" id="AE014133">
    <property type="protein sequence ID" value="AAN58719.1"/>
    <property type="molecule type" value="Genomic_DNA"/>
</dbReference>
<dbReference type="RefSeq" id="NP_721413.1">
    <property type="nucleotide sequence ID" value="NC_004350.2"/>
</dbReference>
<dbReference type="RefSeq" id="WP_002263227.1">
    <property type="nucleotide sequence ID" value="NC_004350.2"/>
</dbReference>
<dbReference type="SMR" id="Q8DUC3"/>
<dbReference type="STRING" id="210007.SMU_1019"/>
<dbReference type="GeneID" id="93859473"/>
<dbReference type="KEGG" id="smu:SMU_1019"/>
<dbReference type="PATRIC" id="fig|210007.7.peg.911"/>
<dbReference type="eggNOG" id="COG3052">
    <property type="taxonomic scope" value="Bacteria"/>
</dbReference>
<dbReference type="HOGENOM" id="CLU_158489_0_0_9"/>
<dbReference type="OrthoDB" id="1120942at2"/>
<dbReference type="PhylomeDB" id="Q8DUC3"/>
<dbReference type="Proteomes" id="UP000002512">
    <property type="component" value="Chromosome"/>
</dbReference>
<dbReference type="GO" id="GO:0005737">
    <property type="term" value="C:cytoplasm"/>
    <property type="evidence" value="ECO:0007669"/>
    <property type="project" value="UniProtKB-SubCell"/>
</dbReference>
<dbReference type="HAMAP" id="MF_00805">
    <property type="entry name" value="CitD"/>
    <property type="match status" value="1"/>
</dbReference>
<dbReference type="InterPro" id="IPR006495">
    <property type="entry name" value="CitD"/>
</dbReference>
<dbReference type="InterPro" id="IPR023439">
    <property type="entry name" value="Mal_deCO2ase/Cit_lyase_ACP"/>
</dbReference>
<dbReference type="NCBIfam" id="TIGR01608">
    <property type="entry name" value="citD"/>
    <property type="match status" value="1"/>
</dbReference>
<dbReference type="NCBIfam" id="NF009726">
    <property type="entry name" value="PRK13253.1"/>
    <property type="match status" value="1"/>
</dbReference>
<dbReference type="Pfam" id="PF06857">
    <property type="entry name" value="ACP"/>
    <property type="match status" value="1"/>
</dbReference>
<dbReference type="PIRSF" id="PIRSF002736">
    <property type="entry name" value="Citrt_lyas_gamma"/>
    <property type="match status" value="1"/>
</dbReference>
<evidence type="ECO:0000255" key="1">
    <source>
        <dbReference type="HAMAP-Rule" id="MF_00805"/>
    </source>
</evidence>